<organism>
    <name type="scientific">Cryptococcus neoformans var. grubii serotype A (strain H99 / ATCC 208821 / CBS 10515 / FGSC 9487)</name>
    <name type="common">Filobasidiella neoformans var. grubii</name>
    <dbReference type="NCBI Taxonomy" id="235443"/>
    <lineage>
        <taxon>Eukaryota</taxon>
        <taxon>Fungi</taxon>
        <taxon>Dikarya</taxon>
        <taxon>Basidiomycota</taxon>
        <taxon>Agaricomycotina</taxon>
        <taxon>Tremellomycetes</taxon>
        <taxon>Tremellales</taxon>
        <taxon>Cryptococcaceae</taxon>
        <taxon>Cryptococcus</taxon>
        <taxon>Cryptococcus neoformans species complex</taxon>
    </lineage>
</organism>
<dbReference type="EC" id="2.4.1.16" evidence="8"/>
<dbReference type="EMBL" id="CP003822">
    <property type="protein sequence ID" value="AFR93607.2"/>
    <property type="molecule type" value="Genomic_DNA"/>
</dbReference>
<dbReference type="RefSeq" id="XP_012047775.1">
    <property type="nucleotide sequence ID" value="XM_012192385.1"/>
</dbReference>
<dbReference type="SMR" id="J9VGT6"/>
<dbReference type="GlyCosmos" id="J9VGT6">
    <property type="glycosylation" value="6 sites, No reported glycans"/>
</dbReference>
<dbReference type="GeneID" id="23890341"/>
<dbReference type="KEGG" id="cng:CNAG_07499"/>
<dbReference type="VEuPathDB" id="FungiDB:CNAG_07499"/>
<dbReference type="HOGENOM" id="CLU_004760_3_1_1"/>
<dbReference type="OrthoDB" id="3069at5206"/>
<dbReference type="Proteomes" id="UP000010091">
    <property type="component" value="Chromosome 3"/>
</dbReference>
<dbReference type="GO" id="GO:0030428">
    <property type="term" value="C:cell septum"/>
    <property type="evidence" value="ECO:0007669"/>
    <property type="project" value="TreeGrafter"/>
</dbReference>
<dbReference type="GO" id="GO:0005886">
    <property type="term" value="C:plasma membrane"/>
    <property type="evidence" value="ECO:0007669"/>
    <property type="project" value="UniProtKB-SubCell"/>
</dbReference>
<dbReference type="GO" id="GO:0004100">
    <property type="term" value="F:chitin synthase activity"/>
    <property type="evidence" value="ECO:0000250"/>
    <property type="project" value="UniProtKB"/>
</dbReference>
<dbReference type="GO" id="GO:0071555">
    <property type="term" value="P:cell wall organization"/>
    <property type="evidence" value="ECO:0007669"/>
    <property type="project" value="UniProtKB-KW"/>
</dbReference>
<dbReference type="GO" id="GO:0006031">
    <property type="term" value="P:chitin biosynthetic process"/>
    <property type="evidence" value="ECO:0000250"/>
    <property type="project" value="UniProtKB"/>
</dbReference>
<dbReference type="CDD" id="cd04190">
    <property type="entry name" value="Chitin_synth_C"/>
    <property type="match status" value="1"/>
</dbReference>
<dbReference type="InterPro" id="IPR004835">
    <property type="entry name" value="Chitin_synth"/>
</dbReference>
<dbReference type="InterPro" id="IPR004834">
    <property type="entry name" value="Chitin_synth_fun"/>
</dbReference>
<dbReference type="InterPro" id="IPR013616">
    <property type="entry name" value="Chitin_synth_N"/>
</dbReference>
<dbReference type="InterPro" id="IPR029044">
    <property type="entry name" value="Nucleotide-diphossugar_trans"/>
</dbReference>
<dbReference type="PANTHER" id="PTHR22914">
    <property type="entry name" value="CHITIN SYNTHASE"/>
    <property type="match status" value="1"/>
</dbReference>
<dbReference type="PANTHER" id="PTHR22914:SF9">
    <property type="entry name" value="CHITIN SYNTHASE 1"/>
    <property type="match status" value="1"/>
</dbReference>
<dbReference type="Pfam" id="PF01644">
    <property type="entry name" value="Chitin_synth_1"/>
    <property type="match status" value="1"/>
</dbReference>
<dbReference type="Pfam" id="PF08407">
    <property type="entry name" value="Chitin_synth_1N"/>
    <property type="match status" value="1"/>
</dbReference>
<dbReference type="SUPFAM" id="SSF53448">
    <property type="entry name" value="Nucleotide-diphospho-sugar transferases"/>
    <property type="match status" value="1"/>
</dbReference>
<feature type="chain" id="PRO_0000451817" description="Chitin synthase 8">
    <location>
        <begin position="1"/>
        <end position="1032"/>
    </location>
</feature>
<feature type="transmembrane region" description="Helical" evidence="2">
    <location>
        <begin position="728"/>
        <end position="748"/>
    </location>
</feature>
<feature type="transmembrane region" description="Helical" evidence="2">
    <location>
        <begin position="762"/>
        <end position="782"/>
    </location>
</feature>
<feature type="transmembrane region" description="Helical" evidence="2">
    <location>
        <begin position="796"/>
        <end position="816"/>
    </location>
</feature>
<feature type="transmembrane region" description="Helical" evidence="2">
    <location>
        <begin position="842"/>
        <end position="862"/>
    </location>
</feature>
<feature type="transmembrane region" description="Helical" evidence="2">
    <location>
        <begin position="870"/>
        <end position="890"/>
    </location>
</feature>
<feature type="transmembrane region" description="Helical" evidence="2">
    <location>
        <begin position="972"/>
        <end position="992"/>
    </location>
</feature>
<feature type="transmembrane region" description="Helical" evidence="2">
    <location>
        <begin position="995"/>
        <end position="1015"/>
    </location>
</feature>
<feature type="region of interest" description="Disordered" evidence="4">
    <location>
        <begin position="1"/>
        <end position="220"/>
    </location>
</feature>
<feature type="compositionally biased region" description="Pro residues" evidence="4">
    <location>
        <begin position="1"/>
        <end position="11"/>
    </location>
</feature>
<feature type="compositionally biased region" description="Pro residues" evidence="4">
    <location>
        <begin position="26"/>
        <end position="41"/>
    </location>
</feature>
<feature type="compositionally biased region" description="Polar residues" evidence="4">
    <location>
        <begin position="65"/>
        <end position="78"/>
    </location>
</feature>
<feature type="compositionally biased region" description="Polar residues" evidence="4">
    <location>
        <begin position="98"/>
        <end position="107"/>
    </location>
</feature>
<feature type="compositionally biased region" description="Polar residues" evidence="4">
    <location>
        <begin position="143"/>
        <end position="160"/>
    </location>
</feature>
<feature type="compositionally biased region" description="Low complexity" evidence="4">
    <location>
        <begin position="176"/>
        <end position="188"/>
    </location>
</feature>
<feature type="glycosylation site" description="N-linked (GlcNAc...) asparagine" evidence="3">
    <location>
        <position position="78"/>
    </location>
</feature>
<feature type="glycosylation site" description="N-linked (GlcNAc...) asparagine" evidence="3">
    <location>
        <position position="215"/>
    </location>
</feature>
<feature type="glycosylation site" description="N-linked (GlcNAc...) asparagine" evidence="3">
    <location>
        <position position="304"/>
    </location>
</feature>
<feature type="glycosylation site" description="N-linked (GlcNAc...) asparagine" evidence="3">
    <location>
        <position position="473"/>
    </location>
</feature>
<feature type="glycosylation site" description="N-linked (GlcNAc...) asparagine" evidence="3">
    <location>
        <position position="545"/>
    </location>
</feature>
<feature type="glycosylation site" description="N-linked (GlcNAc...) asparagine" evidence="3">
    <location>
        <position position="691"/>
    </location>
</feature>
<evidence type="ECO:0000250" key="1">
    <source>
        <dbReference type="UniProtKB" id="P29465"/>
    </source>
</evidence>
<evidence type="ECO:0000255" key="2"/>
<evidence type="ECO:0000255" key="3">
    <source>
        <dbReference type="PROSITE-ProRule" id="PRU00498"/>
    </source>
</evidence>
<evidence type="ECO:0000256" key="4">
    <source>
        <dbReference type="SAM" id="MobiDB-lite"/>
    </source>
</evidence>
<evidence type="ECO:0000269" key="5">
    <source>
    </source>
</evidence>
<evidence type="ECO:0000303" key="6">
    <source>
    </source>
</evidence>
<evidence type="ECO:0000305" key="7"/>
<evidence type="ECO:0000305" key="8">
    <source>
    </source>
</evidence>
<protein>
    <recommendedName>
        <fullName evidence="6">Chitin synthase 8</fullName>
        <ecNumber evidence="8">2.4.1.16</ecNumber>
    </recommendedName>
    <alternativeName>
        <fullName evidence="7">Chitin-UDP acetyl-glucosaminyl transferase 8</fullName>
    </alternativeName>
    <alternativeName>
        <fullName evidence="6">Class-I chitin synthase 8</fullName>
    </alternativeName>
</protein>
<proteinExistence type="inferred from homology"/>
<name>CHS8_CRYNH</name>
<sequence length="1032" mass="114051">MRPGDIYPPPQGYNAYGSPTRQNQRPPQPQPYPPQPYPPQQPAVQYGDPFSASSQGPPTAPLHNMSPTPQEPQGSRYNASHPLQPISPSGPQGPRYSLPTQSLSPFNGSPASAPAPAPYTMGSPSHSNARMHASPPQHIRFDTNPSHLPPQQQLTPSYSYPSGLDDRLTSPPPLLPHHSSQSSVSSIPAPVPDNINYNPSYPPQGYGNAADDDMNDSHPLLAHAAPDARFGIPQSTSAMSMSAPAARYQLSDTGAGDMGVSMYTGNGNAEGQNGFGTGDGVGANGEDEVNMHYGPIPARMVRRNRTQKRVQLFQGHLVLDIEVPTMLLDQCPIRQGNEFTKMRYTAVTCDPNDFVEDRYTLRQRLYDPPRQTELFIVITMYNEDDVLFCRTMRGVMQNIAHLCTRSKSKTWGENGWKKVVVCIVADGRKKINPRTRSVLAALGVYQEGVGKNIINGKPVTAHVYEYTTQLSINSSGKIGPGGSNTVPIQMLFCLKEKNQKKINSHRWFFNAFGACLRPNVCVLLDVGTQPGPDSIYHLWKAFDINSSVGGACGEIVALKGMFWKNLLNPLVAAQNFEYKMSNILDKPLESVFGYITVLPGAFSAYRYIALLNDEKGNGPLKQYFVGERMHGSGAGIFSSNMYLAEDRILCWELVSKRECKWKLHYVKSAYAITDVPDTVPELVSQRRRWLNGSFFAAIHSIVHFGYLYRSSHTFTRKFILHVELVYQTLNMVFAWFALGNYYIAFFVLTQSLNSLGSAWKYVNIPLHYIYIALLLWCFLLSLGNRPAGSKIGYTSSMVGFALITIYMLFAAIFLAVKGIEDVQAEGEITASAVFGNKIFRNIVISLLATYGLYIISSLMALEPWHMITSFFQYLLIAPSYINVLNVYAFCNVHDVSWGTKGSDKVSDDLGAVKSSADNKDEVTVDLPIEQKDINAVYAAELQILGNKAPKEVRVVSDDQKQEDYYKNVRTNVLLVWTMTNGALVAVILQASGGDNSLATTYMGVLLYTVAGLAFFRFLGSSTYLVVRLFAGE</sequence>
<keyword id="KW-1003">Cell membrane</keyword>
<keyword id="KW-0961">Cell wall biogenesis/degradation</keyword>
<keyword id="KW-0325">Glycoprotein</keyword>
<keyword id="KW-0328">Glycosyltransferase</keyword>
<keyword id="KW-0472">Membrane</keyword>
<keyword id="KW-0808">Transferase</keyword>
<keyword id="KW-0812">Transmembrane</keyword>
<keyword id="KW-1133">Transmembrane helix</keyword>
<gene>
    <name evidence="6" type="primary">CHS8</name>
    <name type="ORF">CNAG_07499</name>
</gene>
<reference key="1">
    <citation type="journal article" date="2014" name="PLoS Genet.">
        <title>Analysis of the genome and transcriptome of Cryptococcus neoformans var. grubii reveals complex RNA expression and microevolution leading to virulence attenuation.</title>
        <authorList>
            <person name="Janbon G."/>
            <person name="Ormerod K.L."/>
            <person name="Paulet D."/>
            <person name="Byrnes E.J. III"/>
            <person name="Yadav V."/>
            <person name="Chatterjee G."/>
            <person name="Mullapudi N."/>
            <person name="Hon C.-C."/>
            <person name="Billmyre R.B."/>
            <person name="Brunel F."/>
            <person name="Bahn Y.-S."/>
            <person name="Chen W."/>
            <person name="Chen Y."/>
            <person name="Chow E.W.L."/>
            <person name="Coppee J.-Y."/>
            <person name="Floyd-Averette A."/>
            <person name="Gaillardin C."/>
            <person name="Gerik K.J."/>
            <person name="Goldberg J."/>
            <person name="Gonzalez-Hilarion S."/>
            <person name="Gujja S."/>
            <person name="Hamlin J.L."/>
            <person name="Hsueh Y.-P."/>
            <person name="Ianiri G."/>
            <person name="Jones S."/>
            <person name="Kodira C.D."/>
            <person name="Kozubowski L."/>
            <person name="Lam W."/>
            <person name="Marra M."/>
            <person name="Mesner L.D."/>
            <person name="Mieczkowski P.A."/>
            <person name="Moyrand F."/>
            <person name="Nielsen K."/>
            <person name="Proux C."/>
            <person name="Rossignol T."/>
            <person name="Schein J.E."/>
            <person name="Sun S."/>
            <person name="Wollschlaeger C."/>
            <person name="Wood I.A."/>
            <person name="Zeng Q."/>
            <person name="Neuveglise C."/>
            <person name="Newlon C.S."/>
            <person name="Perfect J.R."/>
            <person name="Lodge J.K."/>
            <person name="Idnurm A."/>
            <person name="Stajich J.E."/>
            <person name="Kronstad J.W."/>
            <person name="Sanyal K."/>
            <person name="Heitman J."/>
            <person name="Fraser J.A."/>
            <person name="Cuomo C.A."/>
            <person name="Dietrich F.S."/>
        </authorList>
    </citation>
    <scope>NUCLEOTIDE SEQUENCE [LARGE SCALE GENOMIC DNA]</scope>
    <source>
        <strain>H99 / ATCC 208821 / CBS 10515 / FGSC 9487</strain>
    </source>
</reference>
<reference key="2">
    <citation type="journal article" date="2005" name="Eukaryot. Cell">
        <title>A chitin synthase and its regulator protein are critical for chitosan production and growth of the fungal pathogen Cryptococcus neoformans.</title>
        <authorList>
            <person name="Banks I.R."/>
            <person name="Specht C.A."/>
            <person name="Donlin M.J."/>
            <person name="Gerik K.J."/>
            <person name="Levitz S.M."/>
            <person name="Lodge J.K."/>
        </authorList>
    </citation>
    <scope>FUNCTION</scope>
</reference>
<reference key="3">
    <citation type="journal article" date="2018" name="Cell Surf.">
        <title>Lack of chitin synthase genes impacts capsular architecture and cellular physiology in Cryptococcus neoformans.</title>
        <authorList>
            <person name="Rodrigues J."/>
            <person name="Ramos C.L."/>
            <person name="Frases S."/>
            <person name="Godinho R.M.D.C."/>
            <person name="Fonseca F.L."/>
            <person name="Rodrigues M.L."/>
        </authorList>
    </citation>
    <scope>DISRUPTION PHENOTYPE</scope>
</reference>
<accession>J9VGT6</accession>
<comment type="function">
    <text evidence="8">Polymerizes chitin, a structural polymer of the cell wall and septum, by transferring the sugar moiety of UDP-GlcNAc to the non-reducing end of the growing chitin polymer.</text>
</comment>
<comment type="catalytic activity">
    <reaction evidence="1">
        <text>[(1-&gt;4)-N-acetyl-beta-D-glucosaminyl](n) + UDP-N-acetyl-alpha-D-glucosamine = [(1-&gt;4)-N-acetyl-beta-D-glucosaminyl](n+1) + UDP + H(+)</text>
        <dbReference type="Rhea" id="RHEA:16637"/>
        <dbReference type="Rhea" id="RHEA-COMP:9593"/>
        <dbReference type="Rhea" id="RHEA-COMP:9595"/>
        <dbReference type="ChEBI" id="CHEBI:15378"/>
        <dbReference type="ChEBI" id="CHEBI:17029"/>
        <dbReference type="ChEBI" id="CHEBI:57705"/>
        <dbReference type="ChEBI" id="CHEBI:58223"/>
        <dbReference type="EC" id="2.4.1.16"/>
    </reaction>
</comment>
<comment type="subcellular location">
    <subcellularLocation>
        <location evidence="7">Cell membrane</location>
        <topology evidence="2">Multi-pass membrane protein</topology>
    </subcellularLocation>
</comment>
<comment type="disruption phenotype">
    <text evidence="5">Abnormal capsular morphology: lower fiber density, decreases capsular diameter.</text>
</comment>
<comment type="similarity">
    <text evidence="7">Belongs to the chitin synthase family.</text>
</comment>